<comment type="function">
    <text evidence="1">DGK/DAK plays an essential role in generating the deoxyribonucleotide precursors, dGTP and dATP, for DNA metabolism.</text>
</comment>
<comment type="catalytic activity">
    <reaction>
        <text>2'-deoxyadenosine + ATP = dAMP + ADP + H(+)</text>
        <dbReference type="Rhea" id="RHEA:23452"/>
        <dbReference type="ChEBI" id="CHEBI:15378"/>
        <dbReference type="ChEBI" id="CHEBI:17256"/>
        <dbReference type="ChEBI" id="CHEBI:30616"/>
        <dbReference type="ChEBI" id="CHEBI:58245"/>
        <dbReference type="ChEBI" id="CHEBI:456216"/>
        <dbReference type="EC" id="2.7.1.76"/>
    </reaction>
</comment>
<comment type="subunit">
    <text evidence="1">Heterodimer of a deoxyadenosine (DAK) and a deoxyguanosine kinase (DGK).</text>
</comment>
<comment type="similarity">
    <text evidence="3">Belongs to the DCK/DGK family.</text>
</comment>
<sequence>MIQVIVLSGPIGAGKSSLTSILAEHLGTQAFYEGVDSNPVLPLYYKDMKRYTFLLNTYLLNHRLAQINQAIQEKNSVSDRSIYEDALFFKMNADSSVADPTEFKIYNDLLENMMEDTPGNPSKKPDLLIYIHVSLDTMLKRIKKRGRSFEQISTDPSLKDYYARLLKYYEPWYENYNASPKIMINGDKLDFVTNMNAQKEVLKEIDEKLREIGNL</sequence>
<feature type="initiator methionine" description="Removed" evidence="1">
    <location>
        <position position="1"/>
    </location>
</feature>
<feature type="chain" id="PRO_0000175095" description="Deoxyadenosine kinase">
    <location>
        <begin position="2"/>
        <end position="215"/>
    </location>
</feature>
<feature type="active site" description="Proton acceptor" evidence="2">
    <location>
        <position position="79"/>
    </location>
</feature>
<feature type="binding site" evidence="1">
    <location>
        <begin position="9"/>
        <end position="17"/>
    </location>
    <ligand>
        <name>ATP</name>
        <dbReference type="ChEBI" id="CHEBI:30616"/>
    </ligand>
</feature>
<feature type="binding site" evidence="1">
    <location>
        <position position="33"/>
    </location>
    <ligand>
        <name>substrate</name>
    </ligand>
</feature>
<feature type="binding site" evidence="1">
    <location>
        <position position="45"/>
    </location>
    <ligand>
        <name>substrate</name>
    </ligand>
</feature>
<feature type="binding site" evidence="1">
    <location>
        <position position="56"/>
    </location>
    <ligand>
        <name>substrate</name>
    </ligand>
</feature>
<feature type="binding site" evidence="1">
    <location>
        <position position="80"/>
    </location>
    <ligand>
        <name>substrate</name>
    </ligand>
</feature>
<feature type="binding site" evidence="1">
    <location>
        <position position="85"/>
    </location>
    <ligand>
        <name>substrate</name>
    </ligand>
</feature>
<feature type="binding site" evidence="1">
    <location>
        <position position="150"/>
    </location>
    <ligand>
        <name>substrate</name>
    </ligand>
</feature>
<organism>
    <name type="scientific">Lactobacillus acidophilus (strain ATCC 700396 / NCK56 / N2 / NCFM)</name>
    <dbReference type="NCBI Taxonomy" id="272621"/>
    <lineage>
        <taxon>Bacteria</taxon>
        <taxon>Bacillati</taxon>
        <taxon>Bacillota</taxon>
        <taxon>Bacilli</taxon>
        <taxon>Lactobacillales</taxon>
        <taxon>Lactobacillaceae</taxon>
        <taxon>Lactobacillus</taxon>
    </lineage>
</organism>
<gene>
    <name type="ordered locus">LBA1949</name>
</gene>
<accession>P0C1F9</accession>
<accession>Q59483</accession>
<accession>Q5FHT0</accession>
<reference key="1">
    <citation type="journal article" date="2005" name="Proc. Natl. Acad. Sci. U.S.A.">
        <title>Complete genome sequence of the probiotic lactic acid bacterium Lactobacillus acidophilus NCFM.</title>
        <authorList>
            <person name="Altermann E."/>
            <person name="Russell W.M."/>
            <person name="Azcarate-Peril M.A."/>
            <person name="Barrangou R."/>
            <person name="Buck B.L."/>
            <person name="McAuliffe O."/>
            <person name="Souther N."/>
            <person name="Dobson A."/>
            <person name="Duong T."/>
            <person name="Callanan M."/>
            <person name="Lick S."/>
            <person name="Hamrick A."/>
            <person name="Cano R."/>
            <person name="Klaenhammer T.R."/>
        </authorList>
    </citation>
    <scope>NUCLEOTIDE SEQUENCE [LARGE SCALE GENOMIC DNA]</scope>
    <source>
        <strain>ATCC 700396 / NCK56 / N2 / NCFM</strain>
    </source>
</reference>
<protein>
    <recommendedName>
        <fullName>Deoxyadenosine kinase</fullName>
        <shortName>DADO kinase</shortName>
        <shortName>DAK</shortName>
        <ecNumber>2.7.1.76</ecNumber>
    </recommendedName>
    <alternativeName>
        <fullName>Deoxynucleoside kinase complex I S-component</fullName>
    </alternativeName>
</protein>
<evidence type="ECO:0000250" key="1"/>
<evidence type="ECO:0000255" key="2"/>
<evidence type="ECO:0000305" key="3"/>
<name>DGK1_LACAC</name>
<proteinExistence type="inferred from homology"/>
<keyword id="KW-0067">ATP-binding</keyword>
<keyword id="KW-0418">Kinase</keyword>
<keyword id="KW-0547">Nucleotide-binding</keyword>
<keyword id="KW-1185">Reference proteome</keyword>
<keyword id="KW-0808">Transferase</keyword>
<dbReference type="EC" id="2.7.1.76"/>
<dbReference type="EMBL" id="CP000033">
    <property type="protein sequence ID" value="AAV43744.1"/>
    <property type="molecule type" value="Genomic_DNA"/>
</dbReference>
<dbReference type="RefSeq" id="WP_003549467.1">
    <property type="nucleotide sequence ID" value="NC_006814.3"/>
</dbReference>
<dbReference type="RefSeq" id="YP_194775.1">
    <property type="nucleotide sequence ID" value="NC_006814.3"/>
</dbReference>
<dbReference type="SMR" id="P0C1F9"/>
<dbReference type="STRING" id="272621.LBA1949"/>
<dbReference type="KEGG" id="lac:LBA1949"/>
<dbReference type="PATRIC" id="fig|272621.13.peg.1853"/>
<dbReference type="eggNOG" id="COG1428">
    <property type="taxonomic scope" value="Bacteria"/>
</dbReference>
<dbReference type="HOGENOM" id="CLU_030466_2_1_9"/>
<dbReference type="OrthoDB" id="9776634at2"/>
<dbReference type="BioCyc" id="LACI272621:G1G49-1900-MONOMER"/>
<dbReference type="BRENDA" id="2.7.1.76">
    <property type="organism ID" value="2846"/>
</dbReference>
<dbReference type="Proteomes" id="UP000006381">
    <property type="component" value="Chromosome"/>
</dbReference>
<dbReference type="GO" id="GO:0005737">
    <property type="term" value="C:cytoplasm"/>
    <property type="evidence" value="ECO:0007669"/>
    <property type="project" value="TreeGrafter"/>
</dbReference>
<dbReference type="GO" id="GO:0005524">
    <property type="term" value="F:ATP binding"/>
    <property type="evidence" value="ECO:0007669"/>
    <property type="project" value="UniProtKB-KW"/>
</dbReference>
<dbReference type="GO" id="GO:0004136">
    <property type="term" value="F:deoxyadenosine kinase activity"/>
    <property type="evidence" value="ECO:0007669"/>
    <property type="project" value="UniProtKB-EC"/>
</dbReference>
<dbReference type="CDD" id="cd01673">
    <property type="entry name" value="dNK"/>
    <property type="match status" value="1"/>
</dbReference>
<dbReference type="Gene3D" id="3.40.50.300">
    <property type="entry name" value="P-loop containing nucleotide triphosphate hydrolases"/>
    <property type="match status" value="1"/>
</dbReference>
<dbReference type="InterPro" id="IPR002624">
    <property type="entry name" value="DCK/DGK"/>
</dbReference>
<dbReference type="InterPro" id="IPR050566">
    <property type="entry name" value="Deoxyribonucleoside_kinase"/>
</dbReference>
<dbReference type="InterPro" id="IPR031314">
    <property type="entry name" value="DNK_dom"/>
</dbReference>
<dbReference type="InterPro" id="IPR027417">
    <property type="entry name" value="P-loop_NTPase"/>
</dbReference>
<dbReference type="PANTHER" id="PTHR10513:SF35">
    <property type="entry name" value="DEOXYADENOSINE KINASE"/>
    <property type="match status" value="1"/>
</dbReference>
<dbReference type="PANTHER" id="PTHR10513">
    <property type="entry name" value="DEOXYNUCLEOSIDE KINASE"/>
    <property type="match status" value="1"/>
</dbReference>
<dbReference type="Pfam" id="PF01712">
    <property type="entry name" value="dNK"/>
    <property type="match status" value="1"/>
</dbReference>
<dbReference type="PIRSF" id="PIRSF000705">
    <property type="entry name" value="DNK"/>
    <property type="match status" value="1"/>
</dbReference>
<dbReference type="SUPFAM" id="SSF52540">
    <property type="entry name" value="P-loop containing nucleoside triphosphate hydrolases"/>
    <property type="match status" value="1"/>
</dbReference>